<reference key="1">
    <citation type="journal article" date="2003" name="Genome Res.">
        <title>Genome sequence of an M3 strain of Streptococcus pyogenes reveals a large-scale genomic rearrangement in invasive strains and new insights into phage evolution.</title>
        <authorList>
            <person name="Nakagawa I."/>
            <person name="Kurokawa K."/>
            <person name="Yamashita A."/>
            <person name="Nakata M."/>
            <person name="Tomiyasu Y."/>
            <person name="Okahashi N."/>
            <person name="Kawabata S."/>
            <person name="Yamazaki K."/>
            <person name="Shiba T."/>
            <person name="Yasunaga T."/>
            <person name="Hayashi H."/>
            <person name="Hattori M."/>
            <person name="Hamada S."/>
        </authorList>
    </citation>
    <scope>NUCLEOTIDE SEQUENCE [LARGE SCALE GENOMIC DNA]</scope>
    <source>
        <strain>SSI-1</strain>
    </source>
</reference>
<comment type="function">
    <text evidence="1">Forms part of the ribosomal stalk which helps the ribosome interact with GTP-bound translation factors.</text>
</comment>
<comment type="subunit">
    <text evidence="1">Part of the ribosomal stalk of the 50S ribosomal subunit. Interacts with L10 and the large rRNA to form the base of the stalk. L10 forms an elongated spine to which L12 dimers bind in a sequential fashion forming a multimeric L10(L12)X complex.</text>
</comment>
<comment type="PTM">
    <text evidence="1">One or more lysine residues are methylated.</text>
</comment>
<comment type="similarity">
    <text evidence="1">Belongs to the universal ribosomal protein uL11 family.</text>
</comment>
<accession>P0DE01</accession>
<accession>P66060</accession>
<accession>Q9A153</accession>
<proteinExistence type="inferred from homology"/>
<name>RL11_STRPQ</name>
<organism>
    <name type="scientific">Streptococcus pyogenes serotype M3 (strain SSI-1)</name>
    <dbReference type="NCBI Taxonomy" id="193567"/>
    <lineage>
        <taxon>Bacteria</taxon>
        <taxon>Bacillati</taxon>
        <taxon>Bacillota</taxon>
        <taxon>Bacilli</taxon>
        <taxon>Lactobacillales</taxon>
        <taxon>Streptococcaceae</taxon>
        <taxon>Streptococcus</taxon>
    </lineage>
</organism>
<protein>
    <recommendedName>
        <fullName evidence="1">Large ribosomal subunit protein uL11</fullName>
    </recommendedName>
    <alternativeName>
        <fullName evidence="2">50S ribosomal protein L11</fullName>
    </alternativeName>
</protein>
<feature type="chain" id="PRO_0000411490" description="Large ribosomal subunit protein uL11">
    <location>
        <begin position="1"/>
        <end position="141"/>
    </location>
</feature>
<sequence>MAKKVEKLVKLQIPAGKATPAPPVGPALGQAGINIMGFTKEFNARTADQAGMIIPVVISVYEDKSFDFITKTPPAAVLLKKAAGVEKGSGTPNTTKVATVTRAQVQEIAETKMPDLNAANIEAAMRMIEGTARSMGFTVTD</sequence>
<evidence type="ECO:0000255" key="1">
    <source>
        <dbReference type="HAMAP-Rule" id="MF_00736"/>
    </source>
</evidence>
<evidence type="ECO:0000305" key="2"/>
<gene>
    <name evidence="1" type="primary">rplK</name>
    <name type="synonym">rl11</name>
    <name type="ordered locus">SPs1533</name>
</gene>
<keyword id="KW-0488">Methylation</keyword>
<keyword id="KW-0687">Ribonucleoprotein</keyword>
<keyword id="KW-0689">Ribosomal protein</keyword>
<keyword id="KW-0694">RNA-binding</keyword>
<keyword id="KW-0699">rRNA-binding</keyword>
<dbReference type="EMBL" id="BA000034">
    <property type="protein sequence ID" value="BAC64628.1"/>
    <property type="molecule type" value="Genomic_DNA"/>
</dbReference>
<dbReference type="RefSeq" id="WP_002990800.1">
    <property type="nucleotide sequence ID" value="NC_004606.1"/>
</dbReference>
<dbReference type="SMR" id="P0DE01"/>
<dbReference type="GeneID" id="69901302"/>
<dbReference type="KEGG" id="sps:SPs1533"/>
<dbReference type="HOGENOM" id="CLU_074237_2_1_9"/>
<dbReference type="GO" id="GO:0022625">
    <property type="term" value="C:cytosolic large ribosomal subunit"/>
    <property type="evidence" value="ECO:0007669"/>
    <property type="project" value="TreeGrafter"/>
</dbReference>
<dbReference type="GO" id="GO:0070180">
    <property type="term" value="F:large ribosomal subunit rRNA binding"/>
    <property type="evidence" value="ECO:0007669"/>
    <property type="project" value="UniProtKB-UniRule"/>
</dbReference>
<dbReference type="GO" id="GO:0003735">
    <property type="term" value="F:structural constituent of ribosome"/>
    <property type="evidence" value="ECO:0007669"/>
    <property type="project" value="InterPro"/>
</dbReference>
<dbReference type="GO" id="GO:0006412">
    <property type="term" value="P:translation"/>
    <property type="evidence" value="ECO:0007669"/>
    <property type="project" value="UniProtKB-UniRule"/>
</dbReference>
<dbReference type="CDD" id="cd00349">
    <property type="entry name" value="Ribosomal_L11"/>
    <property type="match status" value="1"/>
</dbReference>
<dbReference type="FunFam" id="1.10.10.250:FF:000001">
    <property type="entry name" value="50S ribosomal protein L11"/>
    <property type="match status" value="1"/>
</dbReference>
<dbReference type="FunFam" id="3.30.1550.10:FF:000001">
    <property type="entry name" value="50S ribosomal protein L11"/>
    <property type="match status" value="1"/>
</dbReference>
<dbReference type="Gene3D" id="1.10.10.250">
    <property type="entry name" value="Ribosomal protein L11, C-terminal domain"/>
    <property type="match status" value="1"/>
</dbReference>
<dbReference type="Gene3D" id="3.30.1550.10">
    <property type="entry name" value="Ribosomal protein L11/L12, N-terminal domain"/>
    <property type="match status" value="1"/>
</dbReference>
<dbReference type="HAMAP" id="MF_00736">
    <property type="entry name" value="Ribosomal_uL11"/>
    <property type="match status" value="1"/>
</dbReference>
<dbReference type="InterPro" id="IPR000911">
    <property type="entry name" value="Ribosomal_uL11"/>
</dbReference>
<dbReference type="InterPro" id="IPR006519">
    <property type="entry name" value="Ribosomal_uL11_bac-typ"/>
</dbReference>
<dbReference type="InterPro" id="IPR020783">
    <property type="entry name" value="Ribosomal_uL11_C"/>
</dbReference>
<dbReference type="InterPro" id="IPR036769">
    <property type="entry name" value="Ribosomal_uL11_C_sf"/>
</dbReference>
<dbReference type="InterPro" id="IPR020785">
    <property type="entry name" value="Ribosomal_uL11_CS"/>
</dbReference>
<dbReference type="InterPro" id="IPR020784">
    <property type="entry name" value="Ribosomal_uL11_N"/>
</dbReference>
<dbReference type="InterPro" id="IPR036796">
    <property type="entry name" value="Ribosomal_uL11_N_sf"/>
</dbReference>
<dbReference type="NCBIfam" id="TIGR01632">
    <property type="entry name" value="L11_bact"/>
    <property type="match status" value="1"/>
</dbReference>
<dbReference type="PANTHER" id="PTHR11661">
    <property type="entry name" value="60S RIBOSOMAL PROTEIN L12"/>
    <property type="match status" value="1"/>
</dbReference>
<dbReference type="PANTHER" id="PTHR11661:SF1">
    <property type="entry name" value="LARGE RIBOSOMAL SUBUNIT PROTEIN UL11M"/>
    <property type="match status" value="1"/>
</dbReference>
<dbReference type="Pfam" id="PF00298">
    <property type="entry name" value="Ribosomal_L11"/>
    <property type="match status" value="1"/>
</dbReference>
<dbReference type="Pfam" id="PF03946">
    <property type="entry name" value="Ribosomal_L11_N"/>
    <property type="match status" value="1"/>
</dbReference>
<dbReference type="SMART" id="SM00649">
    <property type="entry name" value="RL11"/>
    <property type="match status" value="1"/>
</dbReference>
<dbReference type="SUPFAM" id="SSF54747">
    <property type="entry name" value="Ribosomal L11/L12e N-terminal domain"/>
    <property type="match status" value="1"/>
</dbReference>
<dbReference type="SUPFAM" id="SSF46906">
    <property type="entry name" value="Ribosomal protein L11, C-terminal domain"/>
    <property type="match status" value="1"/>
</dbReference>
<dbReference type="PROSITE" id="PS00359">
    <property type="entry name" value="RIBOSOMAL_L11"/>
    <property type="match status" value="1"/>
</dbReference>